<organism>
    <name type="scientific">Helicobacter pylori (strain G27)</name>
    <dbReference type="NCBI Taxonomy" id="563041"/>
    <lineage>
        <taxon>Bacteria</taxon>
        <taxon>Pseudomonadati</taxon>
        <taxon>Campylobacterota</taxon>
        <taxon>Epsilonproteobacteria</taxon>
        <taxon>Campylobacterales</taxon>
        <taxon>Helicobacteraceae</taxon>
        <taxon>Helicobacter</taxon>
    </lineage>
</organism>
<proteinExistence type="inferred from homology"/>
<evidence type="ECO:0000255" key="1">
    <source>
        <dbReference type="HAMAP-Rule" id="MF_01243"/>
    </source>
</evidence>
<evidence type="ECO:0000255" key="2">
    <source>
        <dbReference type="PROSITE-ProRule" id="PRU00054"/>
    </source>
</evidence>
<name>AMIF_HELPG</name>
<feature type="chain" id="PRO_1000139814" description="Formamidase">
    <location>
        <begin position="1"/>
        <end position="334"/>
    </location>
</feature>
<feature type="domain" description="CN hydrolase" evidence="2">
    <location>
        <begin position="14"/>
        <end position="260"/>
    </location>
</feature>
<feature type="active site" description="Proton acceptor" evidence="1">
    <location>
        <position position="60"/>
    </location>
</feature>
<feature type="active site" description="Proton donor" evidence="1">
    <location>
        <position position="133"/>
    </location>
</feature>
<feature type="active site" description="Nucleophile" evidence="1">
    <location>
        <position position="166"/>
    </location>
</feature>
<protein>
    <recommendedName>
        <fullName evidence="1">Formamidase</fullName>
        <ecNumber evidence="1">3.5.1.49</ecNumber>
    </recommendedName>
    <alternativeName>
        <fullName evidence="1">Formamide amidohydrolase</fullName>
    </alternativeName>
</protein>
<sequence length="334" mass="37290">MGSIGSMGKPIEGFLVAAIQFPVPIVNSRKDIDHNIESIIRTLHATKAGYPGVELIIFPEYSTQGLNTAKWLSEEFLLDVPGKETELYAKACKEAKVYGVFSIMERNPDSNKNPYNTAIIIDPQGKIILKYRKLFPWNPIEPWYPGDLGMPVCEGPGGSKLAVCICHDGMIPELAREAAYKGCNVYIRISGYSTQVNDQWILTNRSNAWHNLMYTVSVNLAGYDNVFYYFGEGQICNFDGTTLVQGHRNPWEIVTGEIYPKMADNARLSWGLENNIYNLGHRGYVAKPGGEHDAGLTYIKDLAAGKYKLPWEDHMKIKDGSIYGYPTTGGRFGK</sequence>
<keyword id="KW-0378">Hydrolase</keyword>
<keyword id="KW-1185">Reference proteome</keyword>
<dbReference type="EC" id="3.5.1.49" evidence="1"/>
<dbReference type="EMBL" id="CP001173">
    <property type="protein sequence ID" value="ACI27932.1"/>
    <property type="molecule type" value="Genomic_DNA"/>
</dbReference>
<dbReference type="RefSeq" id="WP_000534776.1">
    <property type="nucleotide sequence ID" value="NC_011333.1"/>
</dbReference>
<dbReference type="SMR" id="B5Z8N3"/>
<dbReference type="KEGG" id="hpg:HPG27_1182"/>
<dbReference type="HOGENOM" id="CLU_071797_0_0_7"/>
<dbReference type="Proteomes" id="UP000001735">
    <property type="component" value="Chromosome"/>
</dbReference>
<dbReference type="GO" id="GO:0004328">
    <property type="term" value="F:formamidase activity"/>
    <property type="evidence" value="ECO:0007669"/>
    <property type="project" value="UniProtKB-UniRule"/>
</dbReference>
<dbReference type="GO" id="GO:0050126">
    <property type="term" value="F:N-carbamoylputrescine amidase activity"/>
    <property type="evidence" value="ECO:0007669"/>
    <property type="project" value="TreeGrafter"/>
</dbReference>
<dbReference type="GO" id="GO:0033388">
    <property type="term" value="P:putrescine biosynthetic process from arginine"/>
    <property type="evidence" value="ECO:0007669"/>
    <property type="project" value="TreeGrafter"/>
</dbReference>
<dbReference type="CDD" id="cd07565">
    <property type="entry name" value="aliphatic_amidase"/>
    <property type="match status" value="1"/>
</dbReference>
<dbReference type="Gene3D" id="3.60.110.10">
    <property type="entry name" value="Carbon-nitrogen hydrolase"/>
    <property type="match status" value="1"/>
</dbReference>
<dbReference type="HAMAP" id="MF_01243">
    <property type="entry name" value="Formamidase"/>
    <property type="match status" value="1"/>
</dbReference>
<dbReference type="InterPro" id="IPR050345">
    <property type="entry name" value="Aliph_Amidase/BUP"/>
</dbReference>
<dbReference type="InterPro" id="IPR003010">
    <property type="entry name" value="C-N_Hydrolase"/>
</dbReference>
<dbReference type="InterPro" id="IPR036526">
    <property type="entry name" value="C-N_Hydrolase_sf"/>
</dbReference>
<dbReference type="InterPro" id="IPR022843">
    <property type="entry name" value="Formamidase"/>
</dbReference>
<dbReference type="NCBIfam" id="NF009803">
    <property type="entry name" value="PRK13287.1"/>
    <property type="match status" value="1"/>
</dbReference>
<dbReference type="PANTHER" id="PTHR43674:SF15">
    <property type="entry name" value="FORMAMIDASE"/>
    <property type="match status" value="1"/>
</dbReference>
<dbReference type="PANTHER" id="PTHR43674">
    <property type="entry name" value="NITRILASE C965.09-RELATED"/>
    <property type="match status" value="1"/>
</dbReference>
<dbReference type="Pfam" id="PF00795">
    <property type="entry name" value="CN_hydrolase"/>
    <property type="match status" value="1"/>
</dbReference>
<dbReference type="SUPFAM" id="SSF56317">
    <property type="entry name" value="Carbon-nitrogen hydrolase"/>
    <property type="match status" value="1"/>
</dbReference>
<dbReference type="PROSITE" id="PS50263">
    <property type="entry name" value="CN_HYDROLASE"/>
    <property type="match status" value="1"/>
</dbReference>
<gene>
    <name evidence="1" type="primary">amiF</name>
    <name type="ordered locus">HPG27_1182</name>
</gene>
<reference key="1">
    <citation type="journal article" date="2009" name="J. Bacteriol.">
        <title>The complete genome sequence of Helicobacter pylori strain G27.</title>
        <authorList>
            <person name="Baltrus D.A."/>
            <person name="Amieva M.R."/>
            <person name="Covacci A."/>
            <person name="Lowe T.M."/>
            <person name="Merrell D.S."/>
            <person name="Ottemann K.M."/>
            <person name="Stein M."/>
            <person name="Salama N.R."/>
            <person name="Guillemin K."/>
        </authorList>
    </citation>
    <scope>NUCLEOTIDE SEQUENCE [LARGE SCALE GENOMIC DNA]</scope>
    <source>
        <strain>G27</strain>
    </source>
</reference>
<accession>B5Z8N3</accession>
<comment type="function">
    <text evidence="1">Is an aliphatic amidase with a restricted substrate specificity, as it only hydrolyzes formamide.</text>
</comment>
<comment type="catalytic activity">
    <reaction evidence="1">
        <text>formamide + H2O = formate + NH4(+)</text>
        <dbReference type="Rhea" id="RHEA:21948"/>
        <dbReference type="ChEBI" id="CHEBI:15377"/>
        <dbReference type="ChEBI" id="CHEBI:15740"/>
        <dbReference type="ChEBI" id="CHEBI:16397"/>
        <dbReference type="ChEBI" id="CHEBI:28938"/>
        <dbReference type="EC" id="3.5.1.49"/>
    </reaction>
</comment>
<comment type="similarity">
    <text evidence="1">Belongs to the carbon-nitrogen hydrolase superfamily. Aliphatic amidase family.</text>
</comment>